<name>HIS6_PARM1</name>
<reference key="1">
    <citation type="journal article" date="2005" name="DNA Res.">
        <title>Complete genome sequence of the facultative anaerobic magnetotactic bacterium Magnetospirillum sp. strain AMB-1.</title>
        <authorList>
            <person name="Matsunaga T."/>
            <person name="Okamura Y."/>
            <person name="Fukuda Y."/>
            <person name="Wahyudi A.T."/>
            <person name="Murase Y."/>
            <person name="Takeyama H."/>
        </authorList>
    </citation>
    <scope>NUCLEOTIDE SEQUENCE [LARGE SCALE GENOMIC DNA]</scope>
    <source>
        <strain>ATCC 700264 / AMB-1</strain>
    </source>
</reference>
<organism>
    <name type="scientific">Paramagnetospirillum magneticum (strain ATCC 700264 / AMB-1)</name>
    <name type="common">Magnetospirillum magneticum</name>
    <dbReference type="NCBI Taxonomy" id="342108"/>
    <lineage>
        <taxon>Bacteria</taxon>
        <taxon>Pseudomonadati</taxon>
        <taxon>Pseudomonadota</taxon>
        <taxon>Alphaproteobacteria</taxon>
        <taxon>Rhodospirillales</taxon>
        <taxon>Magnetospirillaceae</taxon>
        <taxon>Paramagnetospirillum</taxon>
    </lineage>
</organism>
<evidence type="ECO:0000255" key="1">
    <source>
        <dbReference type="HAMAP-Rule" id="MF_01013"/>
    </source>
</evidence>
<keyword id="KW-0028">Amino-acid biosynthesis</keyword>
<keyword id="KW-0963">Cytoplasm</keyword>
<keyword id="KW-0368">Histidine biosynthesis</keyword>
<keyword id="KW-0456">Lyase</keyword>
<feature type="chain" id="PRO_1000063079" description="Imidazole glycerol phosphate synthase subunit HisF">
    <location>
        <begin position="1"/>
        <end position="252"/>
    </location>
</feature>
<feature type="active site" evidence="1">
    <location>
        <position position="11"/>
    </location>
</feature>
<feature type="active site" evidence="1">
    <location>
        <position position="130"/>
    </location>
</feature>
<dbReference type="EC" id="4.3.2.10" evidence="1"/>
<dbReference type="EMBL" id="AP007255">
    <property type="protein sequence ID" value="BAE53335.1"/>
    <property type="molecule type" value="Genomic_DNA"/>
</dbReference>
<dbReference type="RefSeq" id="WP_011386875.1">
    <property type="nucleotide sequence ID" value="NC_007626.1"/>
</dbReference>
<dbReference type="SMR" id="Q2VYJ0"/>
<dbReference type="STRING" id="342108.amb4531"/>
<dbReference type="KEGG" id="mag:amb4531"/>
<dbReference type="HOGENOM" id="CLU_048577_4_0_5"/>
<dbReference type="OrthoDB" id="9781903at2"/>
<dbReference type="UniPathway" id="UPA00031">
    <property type="reaction ID" value="UER00010"/>
</dbReference>
<dbReference type="Proteomes" id="UP000007058">
    <property type="component" value="Chromosome"/>
</dbReference>
<dbReference type="GO" id="GO:0005737">
    <property type="term" value="C:cytoplasm"/>
    <property type="evidence" value="ECO:0007669"/>
    <property type="project" value="UniProtKB-SubCell"/>
</dbReference>
<dbReference type="GO" id="GO:0000107">
    <property type="term" value="F:imidazoleglycerol-phosphate synthase activity"/>
    <property type="evidence" value="ECO:0007669"/>
    <property type="project" value="UniProtKB-UniRule"/>
</dbReference>
<dbReference type="GO" id="GO:0016829">
    <property type="term" value="F:lyase activity"/>
    <property type="evidence" value="ECO:0007669"/>
    <property type="project" value="UniProtKB-KW"/>
</dbReference>
<dbReference type="GO" id="GO:0000105">
    <property type="term" value="P:L-histidine biosynthetic process"/>
    <property type="evidence" value="ECO:0007669"/>
    <property type="project" value="UniProtKB-UniRule"/>
</dbReference>
<dbReference type="CDD" id="cd04731">
    <property type="entry name" value="HisF"/>
    <property type="match status" value="1"/>
</dbReference>
<dbReference type="FunFam" id="3.20.20.70:FF:000006">
    <property type="entry name" value="Imidazole glycerol phosphate synthase subunit HisF"/>
    <property type="match status" value="1"/>
</dbReference>
<dbReference type="Gene3D" id="3.20.20.70">
    <property type="entry name" value="Aldolase class I"/>
    <property type="match status" value="1"/>
</dbReference>
<dbReference type="HAMAP" id="MF_01013">
    <property type="entry name" value="HisF"/>
    <property type="match status" value="1"/>
</dbReference>
<dbReference type="InterPro" id="IPR013785">
    <property type="entry name" value="Aldolase_TIM"/>
</dbReference>
<dbReference type="InterPro" id="IPR006062">
    <property type="entry name" value="His_biosynth"/>
</dbReference>
<dbReference type="InterPro" id="IPR004651">
    <property type="entry name" value="HisF"/>
</dbReference>
<dbReference type="InterPro" id="IPR050064">
    <property type="entry name" value="IGPS_HisA/HisF"/>
</dbReference>
<dbReference type="InterPro" id="IPR011060">
    <property type="entry name" value="RibuloseP-bd_barrel"/>
</dbReference>
<dbReference type="NCBIfam" id="TIGR00735">
    <property type="entry name" value="hisF"/>
    <property type="match status" value="1"/>
</dbReference>
<dbReference type="PANTHER" id="PTHR21235:SF2">
    <property type="entry name" value="IMIDAZOLE GLYCEROL PHOSPHATE SYNTHASE HISHF"/>
    <property type="match status" value="1"/>
</dbReference>
<dbReference type="PANTHER" id="PTHR21235">
    <property type="entry name" value="IMIDAZOLE GLYCEROL PHOSPHATE SYNTHASE SUBUNIT HISF/H IGP SYNTHASE SUBUNIT HISF/H"/>
    <property type="match status" value="1"/>
</dbReference>
<dbReference type="Pfam" id="PF00977">
    <property type="entry name" value="His_biosynth"/>
    <property type="match status" value="1"/>
</dbReference>
<dbReference type="SUPFAM" id="SSF51366">
    <property type="entry name" value="Ribulose-phoshate binding barrel"/>
    <property type="match status" value="1"/>
</dbReference>
<proteinExistence type="inferred from homology"/>
<protein>
    <recommendedName>
        <fullName evidence="1">Imidazole glycerol phosphate synthase subunit HisF</fullName>
        <ecNumber evidence="1">4.3.2.10</ecNumber>
    </recommendedName>
    <alternativeName>
        <fullName evidence="1">IGP synthase cyclase subunit</fullName>
    </alternativeName>
    <alternativeName>
        <fullName evidence="1">IGP synthase subunit HisF</fullName>
    </alternativeName>
    <alternativeName>
        <fullName evidence="1">ImGP synthase subunit HisF</fullName>
        <shortName evidence="1">IGPS subunit HisF</shortName>
    </alternativeName>
</protein>
<gene>
    <name evidence="1" type="primary">hisF</name>
    <name type="ordered locus">amb4531</name>
</gene>
<accession>Q2VYJ0</accession>
<comment type="function">
    <text evidence="1">IGPS catalyzes the conversion of PRFAR and glutamine to IGP, AICAR and glutamate. The HisF subunit catalyzes the cyclization activity that produces IGP and AICAR from PRFAR using the ammonia provided by the HisH subunit.</text>
</comment>
<comment type="catalytic activity">
    <reaction evidence="1">
        <text>5-[(5-phospho-1-deoxy-D-ribulos-1-ylimino)methylamino]-1-(5-phospho-beta-D-ribosyl)imidazole-4-carboxamide + L-glutamine = D-erythro-1-(imidazol-4-yl)glycerol 3-phosphate + 5-amino-1-(5-phospho-beta-D-ribosyl)imidazole-4-carboxamide + L-glutamate + H(+)</text>
        <dbReference type="Rhea" id="RHEA:24793"/>
        <dbReference type="ChEBI" id="CHEBI:15378"/>
        <dbReference type="ChEBI" id="CHEBI:29985"/>
        <dbReference type="ChEBI" id="CHEBI:58278"/>
        <dbReference type="ChEBI" id="CHEBI:58359"/>
        <dbReference type="ChEBI" id="CHEBI:58475"/>
        <dbReference type="ChEBI" id="CHEBI:58525"/>
        <dbReference type="EC" id="4.3.2.10"/>
    </reaction>
</comment>
<comment type="pathway">
    <text evidence="1">Amino-acid biosynthesis; L-histidine biosynthesis; L-histidine from 5-phospho-alpha-D-ribose 1-diphosphate: step 5/9.</text>
</comment>
<comment type="subunit">
    <text evidence="1">Heterodimer of HisH and HisF.</text>
</comment>
<comment type="subcellular location">
    <subcellularLocation>
        <location evidence="1">Cytoplasm</location>
    </subcellularLocation>
</comment>
<comment type="similarity">
    <text evidence="1">Belongs to the HisA/HisF family.</text>
</comment>
<sequence>MLKMRIIPCLDVKDGRVVKGVNFVDLIDAGDPVEQAKLYDKAGADELTFLDITASHENRDTIYDVVRRTAEQCFMPLTVGGGVRVNDDIRKLLLAGADKVSINTAAVHRPEFVREAAEKFGSQCIVVAIDAKQTGPGKFEIFTHGGRNATGIDAVEWARRMTEYGAGEILLTSMDRDGTKQGFNIPLTRAVADAVTVPVIASGGVGNLDHLVEGIRDGHATAVLAASIFHFGTYTIAQAKAHMRAAGIPVRP</sequence>